<feature type="chain" id="PRO_0000064897" description="Cellulose synthase operon protein D">
    <location>
        <begin position="1"/>
        <end position="156"/>
    </location>
</feature>
<proteinExistence type="inferred from homology"/>
<keyword id="KW-0135">Cellulose biosynthesis</keyword>
<sequence>MTTFNAKPDFSLFLQALSWEIDDQAGIEVRNDLLREVGRGMAGRLQPPLCNTIHQLQIELNALLGMINWGYVKLELLAEEQAMRIVHEDLPQVGSAGEPSGTWLAPVLEGLYGRWITSQPGAFGDYVVTRDVDAEDLNSVPTQTIILYMRTRSNSN</sequence>
<organism>
    <name type="scientific">Komagataeibacter xylinus</name>
    <name type="common">Gluconacetobacter xylinus</name>
    <dbReference type="NCBI Taxonomy" id="28448"/>
    <lineage>
        <taxon>Bacteria</taxon>
        <taxon>Pseudomonadati</taxon>
        <taxon>Pseudomonadota</taxon>
        <taxon>Alphaproteobacteria</taxon>
        <taxon>Acetobacterales</taxon>
        <taxon>Acetobacteraceae</taxon>
        <taxon>Komagataeibacter</taxon>
    </lineage>
</organism>
<comment type="function">
    <text evidence="1">May have a major role in the perfection of crystallization, involved either in the pore structure itself or in the organization of the pores within the linear array of terminal synthesizing complexes (TCs).</text>
</comment>
<comment type="pathway">
    <text>Glycan metabolism; bacterial cellulose biosynthesis.</text>
</comment>
<protein>
    <recommendedName>
        <fullName>Cellulose synthase operon protein D</fullName>
    </recommendedName>
</protein>
<evidence type="ECO:0000250" key="1"/>
<accession>Q9WX64</accession>
<gene>
    <name type="primary">bcsDI</name>
</gene>
<dbReference type="EMBL" id="AB015802">
    <property type="protein sequence ID" value="BAA77588.1"/>
    <property type="molecule type" value="Genomic_DNA"/>
</dbReference>
<dbReference type="SMR" id="Q9WX64"/>
<dbReference type="UniPathway" id="UPA00694"/>
<dbReference type="GO" id="GO:0030244">
    <property type="term" value="P:cellulose biosynthetic process"/>
    <property type="evidence" value="ECO:0007669"/>
    <property type="project" value="UniProtKB-KW"/>
</dbReference>
<dbReference type="Gene3D" id="1.20.5.3790">
    <property type="match status" value="1"/>
</dbReference>
<dbReference type="Gene3D" id="3.30.70.2590">
    <property type="match status" value="1"/>
</dbReference>
<dbReference type="InterPro" id="IPR022798">
    <property type="entry name" value="BcsD_bac"/>
</dbReference>
<dbReference type="InterPro" id="IPR038470">
    <property type="entry name" value="Cellsynth_D_sf"/>
</dbReference>
<dbReference type="Pfam" id="PF03500">
    <property type="entry name" value="Cellsynth_D"/>
    <property type="match status" value="1"/>
</dbReference>
<dbReference type="PRINTS" id="PR01442">
    <property type="entry name" value="CELLSNTHASED"/>
</dbReference>
<reference key="1">
    <citation type="journal article" date="1999" name="DNA Res.">
        <title>Cloning of cellulose synthase genes from Acetobacter xylinum JCM 7664: implication of a novel set of cellulose synthase genes.</title>
        <authorList>
            <person name="Umeda Y."/>
            <person name="Hirano A."/>
            <person name="Ishibashi M."/>
            <person name="Akiyama H."/>
            <person name="Onizuka T."/>
            <person name="Ikeuchi M."/>
            <person name="Inoue Y."/>
        </authorList>
    </citation>
    <scope>NUCLEOTIDE SEQUENCE [GENOMIC DNA]</scope>
    <source>
        <strain>JCM 7664 / NBRC 13693</strain>
    </source>
</reference>
<name>BCSD3_KOMXY</name>